<name>LGT_PSEA8</name>
<keyword id="KW-0997">Cell inner membrane</keyword>
<keyword id="KW-1003">Cell membrane</keyword>
<keyword id="KW-0472">Membrane</keyword>
<keyword id="KW-0808">Transferase</keyword>
<keyword id="KW-0812">Transmembrane</keyword>
<keyword id="KW-1133">Transmembrane helix</keyword>
<protein>
    <recommendedName>
        <fullName evidence="1">Phosphatidylglycerol--prolipoprotein diacylglyceryl transferase</fullName>
        <ecNumber evidence="1">2.5.1.145</ecNumber>
    </recommendedName>
</protein>
<dbReference type="EC" id="2.5.1.145" evidence="1"/>
<dbReference type="EMBL" id="FM209186">
    <property type="protein sequence ID" value="CAW25065.1"/>
    <property type="molecule type" value="Genomic_DNA"/>
</dbReference>
<dbReference type="RefSeq" id="WP_003112963.1">
    <property type="nucleotide sequence ID" value="NC_011770.1"/>
</dbReference>
<dbReference type="SMR" id="B7V2Q4"/>
<dbReference type="KEGG" id="pag:PLES_03381"/>
<dbReference type="HOGENOM" id="CLU_013386_1_0_6"/>
<dbReference type="UniPathway" id="UPA00664"/>
<dbReference type="GO" id="GO:0005886">
    <property type="term" value="C:plasma membrane"/>
    <property type="evidence" value="ECO:0007669"/>
    <property type="project" value="UniProtKB-SubCell"/>
</dbReference>
<dbReference type="GO" id="GO:0008961">
    <property type="term" value="F:phosphatidylglycerol-prolipoprotein diacylglyceryl transferase activity"/>
    <property type="evidence" value="ECO:0007669"/>
    <property type="project" value="UniProtKB-UniRule"/>
</dbReference>
<dbReference type="GO" id="GO:0042158">
    <property type="term" value="P:lipoprotein biosynthetic process"/>
    <property type="evidence" value="ECO:0007669"/>
    <property type="project" value="UniProtKB-UniRule"/>
</dbReference>
<dbReference type="HAMAP" id="MF_01147">
    <property type="entry name" value="Lgt"/>
    <property type="match status" value="1"/>
</dbReference>
<dbReference type="InterPro" id="IPR001640">
    <property type="entry name" value="Lgt"/>
</dbReference>
<dbReference type="NCBIfam" id="TIGR00544">
    <property type="entry name" value="lgt"/>
    <property type="match status" value="1"/>
</dbReference>
<dbReference type="PANTHER" id="PTHR30589:SF0">
    <property type="entry name" value="PHOSPHATIDYLGLYCEROL--PROLIPOPROTEIN DIACYLGLYCERYL TRANSFERASE"/>
    <property type="match status" value="1"/>
</dbReference>
<dbReference type="PANTHER" id="PTHR30589">
    <property type="entry name" value="PROLIPOPROTEIN DIACYLGLYCERYL TRANSFERASE"/>
    <property type="match status" value="1"/>
</dbReference>
<dbReference type="Pfam" id="PF01790">
    <property type="entry name" value="LGT"/>
    <property type="match status" value="1"/>
</dbReference>
<dbReference type="PROSITE" id="PS01311">
    <property type="entry name" value="LGT"/>
    <property type="match status" value="1"/>
</dbReference>
<gene>
    <name evidence="1" type="primary">lgt</name>
    <name type="ordered locus">PLES_03381</name>
</gene>
<evidence type="ECO:0000255" key="1">
    <source>
        <dbReference type="HAMAP-Rule" id="MF_01147"/>
    </source>
</evidence>
<accession>B7V2Q4</accession>
<reference key="1">
    <citation type="journal article" date="2009" name="Genome Res.">
        <title>Newly introduced genomic prophage islands are critical determinants of in vivo competitiveness in the Liverpool epidemic strain of Pseudomonas aeruginosa.</title>
        <authorList>
            <person name="Winstanley C."/>
            <person name="Langille M.G.I."/>
            <person name="Fothergill J.L."/>
            <person name="Kukavica-Ibrulj I."/>
            <person name="Paradis-Bleau C."/>
            <person name="Sanschagrin F."/>
            <person name="Thomson N.R."/>
            <person name="Winsor G.L."/>
            <person name="Quail M.A."/>
            <person name="Lennard N."/>
            <person name="Bignell A."/>
            <person name="Clarke L."/>
            <person name="Seeger K."/>
            <person name="Saunders D."/>
            <person name="Harris D."/>
            <person name="Parkhill J."/>
            <person name="Hancock R.E.W."/>
            <person name="Brinkman F.S.L."/>
            <person name="Levesque R.C."/>
        </authorList>
    </citation>
    <scope>NUCLEOTIDE SEQUENCE [LARGE SCALE GENOMIC DNA]</scope>
    <source>
        <strain>LESB58</strain>
    </source>
</reference>
<proteinExistence type="inferred from homology"/>
<feature type="chain" id="PRO_1000137445" description="Phosphatidylglycerol--prolipoprotein diacylglyceryl transferase">
    <location>
        <begin position="1"/>
        <end position="266"/>
    </location>
</feature>
<feature type="transmembrane region" description="Helical" evidence="1">
    <location>
        <begin position="10"/>
        <end position="30"/>
    </location>
</feature>
<feature type="transmembrane region" description="Helical" evidence="1">
    <location>
        <begin position="56"/>
        <end position="76"/>
    </location>
</feature>
<feature type="transmembrane region" description="Helical" evidence="1">
    <location>
        <begin position="92"/>
        <end position="112"/>
    </location>
</feature>
<feature type="transmembrane region" description="Helical" evidence="1">
    <location>
        <begin position="120"/>
        <end position="140"/>
    </location>
</feature>
<feature type="transmembrane region" description="Helical" evidence="1">
    <location>
        <begin position="171"/>
        <end position="191"/>
    </location>
</feature>
<feature type="transmembrane region" description="Helical" evidence="1">
    <location>
        <begin position="199"/>
        <end position="219"/>
    </location>
</feature>
<feature type="transmembrane region" description="Helical" evidence="1">
    <location>
        <begin position="233"/>
        <end position="253"/>
    </location>
</feature>
<feature type="binding site" evidence="1">
    <location>
        <position position="139"/>
    </location>
    <ligand>
        <name>a 1,2-diacyl-sn-glycero-3-phospho-(1'-sn-glycerol)</name>
        <dbReference type="ChEBI" id="CHEBI:64716"/>
    </ligand>
</feature>
<comment type="function">
    <text evidence="1">Catalyzes the transfer of the diacylglyceryl group from phosphatidylglycerol to the sulfhydryl group of the N-terminal cysteine of a prolipoprotein, the first step in the formation of mature lipoproteins.</text>
</comment>
<comment type="catalytic activity">
    <reaction evidence="1">
        <text>L-cysteinyl-[prolipoprotein] + a 1,2-diacyl-sn-glycero-3-phospho-(1'-sn-glycerol) = an S-1,2-diacyl-sn-glyceryl-L-cysteinyl-[prolipoprotein] + sn-glycerol 1-phosphate + H(+)</text>
        <dbReference type="Rhea" id="RHEA:56712"/>
        <dbReference type="Rhea" id="RHEA-COMP:14679"/>
        <dbReference type="Rhea" id="RHEA-COMP:14680"/>
        <dbReference type="ChEBI" id="CHEBI:15378"/>
        <dbReference type="ChEBI" id="CHEBI:29950"/>
        <dbReference type="ChEBI" id="CHEBI:57685"/>
        <dbReference type="ChEBI" id="CHEBI:64716"/>
        <dbReference type="ChEBI" id="CHEBI:140658"/>
        <dbReference type="EC" id="2.5.1.145"/>
    </reaction>
</comment>
<comment type="pathway">
    <text evidence="1">Protein modification; lipoprotein biosynthesis (diacylglyceryl transfer).</text>
</comment>
<comment type="subcellular location">
    <subcellularLocation>
        <location evidence="1">Cell inner membrane</location>
        <topology evidence="1">Multi-pass membrane protein</topology>
    </subcellularLocation>
</comment>
<comment type="similarity">
    <text evidence="1">Belongs to the Lgt family.</text>
</comment>
<sequence length="266" mass="29848">MLTYPQIDPVALAIGPLKIHWYGLMYLIGIGGAWLLASRRMKRFDPTWTKERLSDLVFWVACGVILGGRLGYVLFYNLDEYIANPTLIFEVWKGGMSFHGGLLGVMLAVWWFGKRHGKSFFQLMDFIAPLVPIGLGAGRIGNFINSELWGKVSDVPWAMVFPNGGPLPRHPSQLYQFALEGVALFVILWLFTRKPRPTASVSGLFVLCYGIFRFVVEFVRVPDAQLGYLAWGWLTMGQVLCVPMVLAGIALMVWAYRRDAAQPKAA</sequence>
<organism>
    <name type="scientific">Pseudomonas aeruginosa (strain LESB58)</name>
    <dbReference type="NCBI Taxonomy" id="557722"/>
    <lineage>
        <taxon>Bacteria</taxon>
        <taxon>Pseudomonadati</taxon>
        <taxon>Pseudomonadota</taxon>
        <taxon>Gammaproteobacteria</taxon>
        <taxon>Pseudomonadales</taxon>
        <taxon>Pseudomonadaceae</taxon>
        <taxon>Pseudomonas</taxon>
    </lineage>
</organism>